<name>TUSB_SALPA</name>
<organism>
    <name type="scientific">Salmonella paratyphi A (strain ATCC 9150 / SARB42)</name>
    <dbReference type="NCBI Taxonomy" id="295319"/>
    <lineage>
        <taxon>Bacteria</taxon>
        <taxon>Pseudomonadati</taxon>
        <taxon>Pseudomonadota</taxon>
        <taxon>Gammaproteobacteria</taxon>
        <taxon>Enterobacterales</taxon>
        <taxon>Enterobacteriaceae</taxon>
        <taxon>Salmonella</taxon>
    </lineage>
</organism>
<keyword id="KW-0963">Cytoplasm</keyword>
<keyword id="KW-0819">tRNA processing</keyword>
<gene>
    <name evidence="1" type="primary">tusB</name>
    <name type="ordered locus">SPA3315</name>
</gene>
<evidence type="ECO:0000255" key="1">
    <source>
        <dbReference type="HAMAP-Rule" id="MF_01564"/>
    </source>
</evidence>
<feature type="chain" id="PRO_0000234517" description="Protein TusB">
    <location>
        <begin position="1"/>
        <end position="95"/>
    </location>
</feature>
<comment type="function">
    <text evidence="1">Part of a sulfur-relay system required for 2-thiolation of 5-methylaminomethyl-2-thiouridine (mnm(5)s(2)U) at tRNA wobble positions.</text>
</comment>
<comment type="subunit">
    <text evidence="1">Heterohexamer, formed by a dimer of trimers. The hexameric TusBCD complex contains 2 copies each of TusB, TusC and TusD. The TusBCD complex interacts with TusE.</text>
</comment>
<comment type="subcellular location">
    <subcellularLocation>
        <location evidence="1">Cytoplasm</location>
    </subcellularLocation>
</comment>
<comment type="similarity">
    <text evidence="1">Belongs to the DsrH/TusB family.</text>
</comment>
<reference key="1">
    <citation type="journal article" date="2004" name="Nat. Genet.">
        <title>Comparison of genome degradation in Paratyphi A and Typhi, human-restricted serovars of Salmonella enterica that cause typhoid.</title>
        <authorList>
            <person name="McClelland M."/>
            <person name="Sanderson K.E."/>
            <person name="Clifton S.W."/>
            <person name="Latreille P."/>
            <person name="Porwollik S."/>
            <person name="Sabo A."/>
            <person name="Meyer R."/>
            <person name="Bieri T."/>
            <person name="Ozersky P."/>
            <person name="McLellan M."/>
            <person name="Harkins C.R."/>
            <person name="Wang C."/>
            <person name="Nguyen C."/>
            <person name="Berghoff A."/>
            <person name="Elliott G."/>
            <person name="Kohlberg S."/>
            <person name="Strong C."/>
            <person name="Du F."/>
            <person name="Carter J."/>
            <person name="Kremizki C."/>
            <person name="Layman D."/>
            <person name="Leonard S."/>
            <person name="Sun H."/>
            <person name="Fulton L."/>
            <person name="Nash W."/>
            <person name="Miner T."/>
            <person name="Minx P."/>
            <person name="Delehaunty K."/>
            <person name="Fronick C."/>
            <person name="Magrini V."/>
            <person name="Nhan M."/>
            <person name="Warren W."/>
            <person name="Florea L."/>
            <person name="Spieth J."/>
            <person name="Wilson R.K."/>
        </authorList>
    </citation>
    <scope>NUCLEOTIDE SEQUENCE [LARGE SCALE GENOMIC DNA]</scope>
    <source>
        <strain>ATCC 9150 / SARB42</strain>
    </source>
</reference>
<sequence length="95" mass="10502">MLHTLPHCASGVDFPALLRLLKEGDALLLLQDGVTVAIEGNRFLESLRDAPITVYALKEDIDARGLGGQISDSVVRVDYTEFVRLTVKYANQMAW</sequence>
<protein>
    <recommendedName>
        <fullName evidence="1">Protein TusB</fullName>
    </recommendedName>
    <alternativeName>
        <fullName evidence="1">tRNA 2-thiouridine synthesizing protein B</fullName>
    </alternativeName>
</protein>
<proteinExistence type="inferred from homology"/>
<dbReference type="EMBL" id="CP000026">
    <property type="protein sequence ID" value="AAV79131.1"/>
    <property type="molecule type" value="Genomic_DNA"/>
</dbReference>
<dbReference type="RefSeq" id="WP_000903398.1">
    <property type="nucleotide sequence ID" value="NC_006511.1"/>
</dbReference>
<dbReference type="SMR" id="Q5PIW0"/>
<dbReference type="KEGG" id="spt:SPA3315"/>
<dbReference type="HOGENOM" id="CLU_166087_2_1_6"/>
<dbReference type="Proteomes" id="UP000008185">
    <property type="component" value="Chromosome"/>
</dbReference>
<dbReference type="GO" id="GO:1990228">
    <property type="term" value="C:sulfurtransferase complex"/>
    <property type="evidence" value="ECO:0007669"/>
    <property type="project" value="TreeGrafter"/>
</dbReference>
<dbReference type="GO" id="GO:0002143">
    <property type="term" value="P:tRNA wobble position uridine thiolation"/>
    <property type="evidence" value="ECO:0007669"/>
    <property type="project" value="InterPro"/>
</dbReference>
<dbReference type="FunFam" id="3.40.1260.10:FF:000002">
    <property type="entry name" value="Sulfurtransferase TusB"/>
    <property type="match status" value="1"/>
</dbReference>
<dbReference type="Gene3D" id="3.40.1260.10">
    <property type="entry name" value="DsrEFH-like"/>
    <property type="match status" value="1"/>
</dbReference>
<dbReference type="HAMAP" id="MF_01564">
    <property type="entry name" value="Thiourid_synth_B"/>
    <property type="match status" value="1"/>
</dbReference>
<dbReference type="InterPro" id="IPR027396">
    <property type="entry name" value="DsrEFH-like"/>
</dbReference>
<dbReference type="InterPro" id="IPR023526">
    <property type="entry name" value="Sulphur_relay_TusB"/>
</dbReference>
<dbReference type="InterPro" id="IPR007215">
    <property type="entry name" value="Sulphur_relay_TusB/DsrH"/>
</dbReference>
<dbReference type="NCBIfam" id="NF010035">
    <property type="entry name" value="PRK13510.1"/>
    <property type="match status" value="1"/>
</dbReference>
<dbReference type="NCBIfam" id="TIGR03011">
    <property type="entry name" value="sulf_tusB_dsrH"/>
    <property type="match status" value="1"/>
</dbReference>
<dbReference type="PANTHER" id="PTHR37526">
    <property type="entry name" value="PROTEIN TUSB"/>
    <property type="match status" value="1"/>
</dbReference>
<dbReference type="PANTHER" id="PTHR37526:SF1">
    <property type="entry name" value="PROTEIN TUSB"/>
    <property type="match status" value="1"/>
</dbReference>
<dbReference type="Pfam" id="PF04077">
    <property type="entry name" value="DsrH"/>
    <property type="match status" value="1"/>
</dbReference>
<dbReference type="SUPFAM" id="SSF75169">
    <property type="entry name" value="DsrEFH-like"/>
    <property type="match status" value="1"/>
</dbReference>
<accession>Q5PIW0</accession>